<proteinExistence type="inferred from homology"/>
<keyword id="KW-0240">DNA-directed RNA polymerase</keyword>
<keyword id="KW-0548">Nucleotidyltransferase</keyword>
<keyword id="KW-0804">Transcription</keyword>
<keyword id="KW-0808">Transferase</keyword>
<reference key="1">
    <citation type="journal article" date="2008" name="BMC Genomics">
        <title>The genome of Aeromonas salmonicida subsp. salmonicida A449: insights into the evolution of a fish pathogen.</title>
        <authorList>
            <person name="Reith M.E."/>
            <person name="Singh R.K."/>
            <person name="Curtis B."/>
            <person name="Boyd J.M."/>
            <person name="Bouevitch A."/>
            <person name="Kimball J."/>
            <person name="Munholland J."/>
            <person name="Murphy C."/>
            <person name="Sarty D."/>
            <person name="Williams J."/>
            <person name="Nash J.H."/>
            <person name="Johnson S.C."/>
            <person name="Brown L.L."/>
        </authorList>
    </citation>
    <scope>NUCLEOTIDE SEQUENCE [LARGE SCALE GENOMIC DNA]</scope>
    <source>
        <strain>A449</strain>
    </source>
</reference>
<sequence length="91" mass="10015">MARVTVEDAVKQVGNRFDLVLVAARRARQIAVQGKDPLVDEENDKPTVIALREIELGLVNNQVMDTQDRYEQQEQEAAELAAVAAIAEGRG</sequence>
<protein>
    <recommendedName>
        <fullName evidence="1">DNA-directed RNA polymerase subunit omega</fullName>
        <shortName evidence="1">RNAP omega subunit</shortName>
        <ecNumber evidence="1">2.7.7.6</ecNumber>
    </recommendedName>
    <alternativeName>
        <fullName evidence="1">RNA polymerase omega subunit</fullName>
    </alternativeName>
    <alternativeName>
        <fullName evidence="1">Transcriptase subunit omega</fullName>
    </alternativeName>
</protein>
<evidence type="ECO:0000255" key="1">
    <source>
        <dbReference type="HAMAP-Rule" id="MF_00366"/>
    </source>
</evidence>
<name>RPOZ_AERS4</name>
<comment type="function">
    <text evidence="1">Promotes RNA polymerase assembly. Latches the N- and C-terminal regions of the beta' subunit thereby facilitating its interaction with the beta and alpha subunits.</text>
</comment>
<comment type="catalytic activity">
    <reaction evidence="1">
        <text>RNA(n) + a ribonucleoside 5'-triphosphate = RNA(n+1) + diphosphate</text>
        <dbReference type="Rhea" id="RHEA:21248"/>
        <dbReference type="Rhea" id="RHEA-COMP:14527"/>
        <dbReference type="Rhea" id="RHEA-COMP:17342"/>
        <dbReference type="ChEBI" id="CHEBI:33019"/>
        <dbReference type="ChEBI" id="CHEBI:61557"/>
        <dbReference type="ChEBI" id="CHEBI:140395"/>
        <dbReference type="EC" id="2.7.7.6"/>
    </reaction>
</comment>
<comment type="subunit">
    <text evidence="1">The RNAP catalytic core consists of 2 alpha, 1 beta, 1 beta' and 1 omega subunit. When a sigma factor is associated with the core the holoenzyme is formed, which can initiate transcription.</text>
</comment>
<comment type="similarity">
    <text evidence="1">Belongs to the RNA polymerase subunit omega family.</text>
</comment>
<accession>A4SH73</accession>
<feature type="chain" id="PRO_1000005882" description="DNA-directed RNA polymerase subunit omega">
    <location>
        <begin position="1"/>
        <end position="91"/>
    </location>
</feature>
<organism>
    <name type="scientific">Aeromonas salmonicida (strain A449)</name>
    <dbReference type="NCBI Taxonomy" id="382245"/>
    <lineage>
        <taxon>Bacteria</taxon>
        <taxon>Pseudomonadati</taxon>
        <taxon>Pseudomonadota</taxon>
        <taxon>Gammaproteobacteria</taxon>
        <taxon>Aeromonadales</taxon>
        <taxon>Aeromonadaceae</taxon>
        <taxon>Aeromonas</taxon>
    </lineage>
</organism>
<dbReference type="EC" id="2.7.7.6" evidence="1"/>
<dbReference type="EMBL" id="CP000644">
    <property type="protein sequence ID" value="ABO88245.1"/>
    <property type="molecule type" value="Genomic_DNA"/>
</dbReference>
<dbReference type="RefSeq" id="WP_005307060.1">
    <property type="nucleotide sequence ID" value="NC_009348.1"/>
</dbReference>
<dbReference type="SMR" id="A4SH73"/>
<dbReference type="STRING" id="29491.GCA_000820065_00517"/>
<dbReference type="GeneID" id="97858946"/>
<dbReference type="KEGG" id="asa:ASA_0035"/>
<dbReference type="eggNOG" id="COG1758">
    <property type="taxonomic scope" value="Bacteria"/>
</dbReference>
<dbReference type="HOGENOM" id="CLU_125406_5_3_6"/>
<dbReference type="Proteomes" id="UP000000225">
    <property type="component" value="Chromosome"/>
</dbReference>
<dbReference type="GO" id="GO:0000428">
    <property type="term" value="C:DNA-directed RNA polymerase complex"/>
    <property type="evidence" value="ECO:0007669"/>
    <property type="project" value="UniProtKB-KW"/>
</dbReference>
<dbReference type="GO" id="GO:0003677">
    <property type="term" value="F:DNA binding"/>
    <property type="evidence" value="ECO:0007669"/>
    <property type="project" value="UniProtKB-UniRule"/>
</dbReference>
<dbReference type="GO" id="GO:0003899">
    <property type="term" value="F:DNA-directed RNA polymerase activity"/>
    <property type="evidence" value="ECO:0007669"/>
    <property type="project" value="UniProtKB-UniRule"/>
</dbReference>
<dbReference type="GO" id="GO:0006351">
    <property type="term" value="P:DNA-templated transcription"/>
    <property type="evidence" value="ECO:0007669"/>
    <property type="project" value="UniProtKB-UniRule"/>
</dbReference>
<dbReference type="Gene3D" id="3.90.940.10">
    <property type="match status" value="1"/>
</dbReference>
<dbReference type="HAMAP" id="MF_00366">
    <property type="entry name" value="RNApol_bact_RpoZ"/>
    <property type="match status" value="1"/>
</dbReference>
<dbReference type="InterPro" id="IPR003716">
    <property type="entry name" value="DNA-dir_RNA_pol_omega"/>
</dbReference>
<dbReference type="InterPro" id="IPR006110">
    <property type="entry name" value="Pol_omega/Rpo6/RPB6"/>
</dbReference>
<dbReference type="InterPro" id="IPR036161">
    <property type="entry name" value="RPB6/omega-like_sf"/>
</dbReference>
<dbReference type="NCBIfam" id="TIGR00690">
    <property type="entry name" value="rpoZ"/>
    <property type="match status" value="1"/>
</dbReference>
<dbReference type="PANTHER" id="PTHR34476">
    <property type="entry name" value="DNA-DIRECTED RNA POLYMERASE SUBUNIT OMEGA"/>
    <property type="match status" value="1"/>
</dbReference>
<dbReference type="PANTHER" id="PTHR34476:SF1">
    <property type="entry name" value="DNA-DIRECTED RNA POLYMERASE SUBUNIT OMEGA"/>
    <property type="match status" value="1"/>
</dbReference>
<dbReference type="Pfam" id="PF01192">
    <property type="entry name" value="RNA_pol_Rpb6"/>
    <property type="match status" value="1"/>
</dbReference>
<dbReference type="SMART" id="SM01409">
    <property type="entry name" value="RNA_pol_Rpb6"/>
    <property type="match status" value="1"/>
</dbReference>
<dbReference type="SUPFAM" id="SSF63562">
    <property type="entry name" value="RPB6/omega subunit-like"/>
    <property type="match status" value="1"/>
</dbReference>
<gene>
    <name evidence="1" type="primary">rpoZ</name>
    <name type="ordered locus">ASA_0035</name>
</gene>